<comment type="catalytic activity">
    <reaction evidence="1">
        <text>L-histidinol phosphate + 2-oxoglutarate = 3-(imidazol-4-yl)-2-oxopropyl phosphate + L-glutamate</text>
        <dbReference type="Rhea" id="RHEA:23744"/>
        <dbReference type="ChEBI" id="CHEBI:16810"/>
        <dbReference type="ChEBI" id="CHEBI:29985"/>
        <dbReference type="ChEBI" id="CHEBI:57766"/>
        <dbReference type="ChEBI" id="CHEBI:57980"/>
        <dbReference type="EC" id="2.6.1.9"/>
    </reaction>
</comment>
<comment type="cofactor">
    <cofactor evidence="1">
        <name>pyridoxal 5'-phosphate</name>
        <dbReference type="ChEBI" id="CHEBI:597326"/>
    </cofactor>
</comment>
<comment type="pathway">
    <text evidence="1">Amino-acid biosynthesis; L-histidine biosynthesis; L-histidine from 5-phospho-alpha-D-ribose 1-diphosphate: step 7/9.</text>
</comment>
<comment type="subunit">
    <text evidence="1">Homodimer.</text>
</comment>
<comment type="similarity">
    <text evidence="1">Belongs to the class-II pyridoxal-phosphate-dependent aminotransferase family. Histidinol-phosphate aminotransferase subfamily.</text>
</comment>
<proteinExistence type="inferred from homology"/>
<accession>A7FU81</accession>
<gene>
    <name evidence="1" type="primary">hisC</name>
    <name type="ordered locus">CLB_1591</name>
</gene>
<protein>
    <recommendedName>
        <fullName evidence="1">Histidinol-phosphate aminotransferase</fullName>
        <ecNumber evidence="1">2.6.1.9</ecNumber>
    </recommendedName>
    <alternativeName>
        <fullName evidence="1">Imidazole acetol-phosphate transaminase</fullName>
    </alternativeName>
</protein>
<evidence type="ECO:0000255" key="1">
    <source>
        <dbReference type="HAMAP-Rule" id="MF_01023"/>
    </source>
</evidence>
<keyword id="KW-0028">Amino-acid biosynthesis</keyword>
<keyword id="KW-0032">Aminotransferase</keyword>
<keyword id="KW-0368">Histidine biosynthesis</keyword>
<keyword id="KW-0663">Pyridoxal phosphate</keyword>
<keyword id="KW-0808">Transferase</keyword>
<sequence>MSKYWSNITKDIEPYVCGEQPKNKKIIKLNTNENPYPPSPKVLQAIENAAKDDLRLYPDPNCDTLRKTIANYYNLSKEEVFIGNGSDEVLSLSFLTFFNPEETVVFSDISYSFYPVYANLYKLDYELAKLREDFSIDIEDFKNTKGGAIITNPNAPTGLYLSLDSIKQILEDNINKVVMVDEAYIDFGGESSVSLIKDYPNLLVIQTLSKSRSLAGMRIGFALGKKELIEGLNRIKNSFNSYTIDRISSLAAIEAIKDEEYFKECTLKVIKTRNWTINELGKIGFKIIPSKANFIFITHDTYQAEDILIKLRDENVLVRYFNKDRISNYLRVSIGSKEEMEIFMDKIKKIINKL</sequence>
<name>HIS8_CLOB1</name>
<reference key="1">
    <citation type="journal article" date="2007" name="PLoS ONE">
        <title>Analysis of the neurotoxin complex genes in Clostridium botulinum A1-A4 and B1 strains: BoNT/A3, /Ba4 and /B1 clusters are located within plasmids.</title>
        <authorList>
            <person name="Smith T.J."/>
            <person name="Hill K.K."/>
            <person name="Foley B.T."/>
            <person name="Detter J.C."/>
            <person name="Munk A.C."/>
            <person name="Bruce D.C."/>
            <person name="Doggett N.A."/>
            <person name="Smith L.A."/>
            <person name="Marks J.D."/>
            <person name="Xie G."/>
            <person name="Brettin T.S."/>
        </authorList>
    </citation>
    <scope>NUCLEOTIDE SEQUENCE [LARGE SCALE GENOMIC DNA]</scope>
    <source>
        <strain>ATCC 19397 / Type A</strain>
    </source>
</reference>
<feature type="chain" id="PRO_0000319749" description="Histidinol-phosphate aminotransferase">
    <location>
        <begin position="1"/>
        <end position="354"/>
    </location>
</feature>
<feature type="modified residue" description="N6-(pyridoxal phosphate)lysine" evidence="1">
    <location>
        <position position="210"/>
    </location>
</feature>
<dbReference type="EC" id="2.6.1.9" evidence="1"/>
<dbReference type="EMBL" id="CP000726">
    <property type="protein sequence ID" value="ABS34355.1"/>
    <property type="molecule type" value="Genomic_DNA"/>
</dbReference>
<dbReference type="RefSeq" id="WP_011949115.1">
    <property type="nucleotide sequence ID" value="NC_009697.1"/>
</dbReference>
<dbReference type="SMR" id="A7FU81"/>
<dbReference type="GeneID" id="5185826"/>
<dbReference type="KEGG" id="cba:CLB_1591"/>
<dbReference type="HOGENOM" id="CLU_017584_3_0_9"/>
<dbReference type="UniPathway" id="UPA00031">
    <property type="reaction ID" value="UER00012"/>
</dbReference>
<dbReference type="GO" id="GO:0004400">
    <property type="term" value="F:histidinol-phosphate transaminase activity"/>
    <property type="evidence" value="ECO:0007669"/>
    <property type="project" value="UniProtKB-UniRule"/>
</dbReference>
<dbReference type="GO" id="GO:0030170">
    <property type="term" value="F:pyridoxal phosphate binding"/>
    <property type="evidence" value="ECO:0007669"/>
    <property type="project" value="InterPro"/>
</dbReference>
<dbReference type="GO" id="GO:0000105">
    <property type="term" value="P:L-histidine biosynthetic process"/>
    <property type="evidence" value="ECO:0007669"/>
    <property type="project" value="UniProtKB-UniRule"/>
</dbReference>
<dbReference type="CDD" id="cd00609">
    <property type="entry name" value="AAT_like"/>
    <property type="match status" value="1"/>
</dbReference>
<dbReference type="Gene3D" id="3.90.1150.10">
    <property type="entry name" value="Aspartate Aminotransferase, domain 1"/>
    <property type="match status" value="1"/>
</dbReference>
<dbReference type="Gene3D" id="3.40.640.10">
    <property type="entry name" value="Type I PLP-dependent aspartate aminotransferase-like (Major domain)"/>
    <property type="match status" value="1"/>
</dbReference>
<dbReference type="HAMAP" id="MF_01023">
    <property type="entry name" value="HisC_aminotrans_2"/>
    <property type="match status" value="1"/>
</dbReference>
<dbReference type="InterPro" id="IPR001917">
    <property type="entry name" value="Aminotrans_II_pyridoxalP_BS"/>
</dbReference>
<dbReference type="InterPro" id="IPR004839">
    <property type="entry name" value="Aminotransferase_I/II_large"/>
</dbReference>
<dbReference type="InterPro" id="IPR005861">
    <property type="entry name" value="HisP_aminotrans"/>
</dbReference>
<dbReference type="InterPro" id="IPR050106">
    <property type="entry name" value="HistidinolP_aminotransfase"/>
</dbReference>
<dbReference type="InterPro" id="IPR015424">
    <property type="entry name" value="PyrdxlP-dep_Trfase"/>
</dbReference>
<dbReference type="InterPro" id="IPR015421">
    <property type="entry name" value="PyrdxlP-dep_Trfase_major"/>
</dbReference>
<dbReference type="InterPro" id="IPR015422">
    <property type="entry name" value="PyrdxlP-dep_Trfase_small"/>
</dbReference>
<dbReference type="NCBIfam" id="TIGR01141">
    <property type="entry name" value="hisC"/>
    <property type="match status" value="1"/>
</dbReference>
<dbReference type="PANTHER" id="PTHR43643:SF3">
    <property type="entry name" value="HISTIDINOL-PHOSPHATE AMINOTRANSFERASE"/>
    <property type="match status" value="1"/>
</dbReference>
<dbReference type="PANTHER" id="PTHR43643">
    <property type="entry name" value="HISTIDINOL-PHOSPHATE AMINOTRANSFERASE 2"/>
    <property type="match status" value="1"/>
</dbReference>
<dbReference type="Pfam" id="PF00155">
    <property type="entry name" value="Aminotran_1_2"/>
    <property type="match status" value="1"/>
</dbReference>
<dbReference type="SUPFAM" id="SSF53383">
    <property type="entry name" value="PLP-dependent transferases"/>
    <property type="match status" value="1"/>
</dbReference>
<dbReference type="PROSITE" id="PS00599">
    <property type="entry name" value="AA_TRANSFER_CLASS_2"/>
    <property type="match status" value="1"/>
</dbReference>
<organism>
    <name type="scientific">Clostridium botulinum (strain ATCC 19397 / Type A)</name>
    <dbReference type="NCBI Taxonomy" id="441770"/>
    <lineage>
        <taxon>Bacteria</taxon>
        <taxon>Bacillati</taxon>
        <taxon>Bacillota</taxon>
        <taxon>Clostridia</taxon>
        <taxon>Eubacteriales</taxon>
        <taxon>Clostridiaceae</taxon>
        <taxon>Clostridium</taxon>
    </lineage>
</organism>